<dbReference type="EC" id="2.7.7.56" evidence="1"/>
<dbReference type="EMBL" id="BX640446">
    <property type="protein sequence ID" value="CAE33453.1"/>
    <property type="molecule type" value="Genomic_DNA"/>
</dbReference>
<dbReference type="RefSeq" id="WP_003811149.1">
    <property type="nucleotide sequence ID" value="NC_002927.3"/>
</dbReference>
<dbReference type="SMR" id="Q7WI90"/>
<dbReference type="GeneID" id="69601506"/>
<dbReference type="KEGG" id="bbr:BB2961"/>
<dbReference type="eggNOG" id="COG0689">
    <property type="taxonomic scope" value="Bacteria"/>
</dbReference>
<dbReference type="HOGENOM" id="CLU_050858_0_0_4"/>
<dbReference type="Proteomes" id="UP000001027">
    <property type="component" value="Chromosome"/>
</dbReference>
<dbReference type="GO" id="GO:0000175">
    <property type="term" value="F:3'-5'-RNA exonuclease activity"/>
    <property type="evidence" value="ECO:0007669"/>
    <property type="project" value="UniProtKB-UniRule"/>
</dbReference>
<dbReference type="GO" id="GO:0000049">
    <property type="term" value="F:tRNA binding"/>
    <property type="evidence" value="ECO:0007669"/>
    <property type="project" value="UniProtKB-UniRule"/>
</dbReference>
<dbReference type="GO" id="GO:0009022">
    <property type="term" value="F:tRNA nucleotidyltransferase activity"/>
    <property type="evidence" value="ECO:0007669"/>
    <property type="project" value="UniProtKB-UniRule"/>
</dbReference>
<dbReference type="GO" id="GO:0016075">
    <property type="term" value="P:rRNA catabolic process"/>
    <property type="evidence" value="ECO:0007669"/>
    <property type="project" value="UniProtKB-UniRule"/>
</dbReference>
<dbReference type="GO" id="GO:0006364">
    <property type="term" value="P:rRNA processing"/>
    <property type="evidence" value="ECO:0007669"/>
    <property type="project" value="UniProtKB-KW"/>
</dbReference>
<dbReference type="GO" id="GO:0008033">
    <property type="term" value="P:tRNA processing"/>
    <property type="evidence" value="ECO:0007669"/>
    <property type="project" value="UniProtKB-UniRule"/>
</dbReference>
<dbReference type="CDD" id="cd11362">
    <property type="entry name" value="RNase_PH_bact"/>
    <property type="match status" value="1"/>
</dbReference>
<dbReference type="FunFam" id="3.30.230.70:FF:000003">
    <property type="entry name" value="Ribonuclease PH"/>
    <property type="match status" value="1"/>
</dbReference>
<dbReference type="Gene3D" id="3.30.230.70">
    <property type="entry name" value="GHMP Kinase, N-terminal domain"/>
    <property type="match status" value="1"/>
</dbReference>
<dbReference type="HAMAP" id="MF_00564">
    <property type="entry name" value="RNase_PH"/>
    <property type="match status" value="1"/>
</dbReference>
<dbReference type="InterPro" id="IPR001247">
    <property type="entry name" value="ExoRNase_PH_dom1"/>
</dbReference>
<dbReference type="InterPro" id="IPR015847">
    <property type="entry name" value="ExoRNase_PH_dom2"/>
</dbReference>
<dbReference type="InterPro" id="IPR036345">
    <property type="entry name" value="ExoRNase_PH_dom2_sf"/>
</dbReference>
<dbReference type="InterPro" id="IPR027408">
    <property type="entry name" value="PNPase/RNase_PH_dom_sf"/>
</dbReference>
<dbReference type="InterPro" id="IPR020568">
    <property type="entry name" value="Ribosomal_Su5_D2-typ_SF"/>
</dbReference>
<dbReference type="InterPro" id="IPR050080">
    <property type="entry name" value="RNase_PH"/>
</dbReference>
<dbReference type="InterPro" id="IPR002381">
    <property type="entry name" value="RNase_PH_bac-type"/>
</dbReference>
<dbReference type="InterPro" id="IPR018336">
    <property type="entry name" value="RNase_PH_CS"/>
</dbReference>
<dbReference type="NCBIfam" id="TIGR01966">
    <property type="entry name" value="RNasePH"/>
    <property type="match status" value="1"/>
</dbReference>
<dbReference type="PANTHER" id="PTHR11953">
    <property type="entry name" value="EXOSOME COMPLEX COMPONENT"/>
    <property type="match status" value="1"/>
</dbReference>
<dbReference type="PANTHER" id="PTHR11953:SF0">
    <property type="entry name" value="EXOSOME COMPLEX COMPONENT RRP41"/>
    <property type="match status" value="1"/>
</dbReference>
<dbReference type="Pfam" id="PF01138">
    <property type="entry name" value="RNase_PH"/>
    <property type="match status" value="1"/>
</dbReference>
<dbReference type="Pfam" id="PF03725">
    <property type="entry name" value="RNase_PH_C"/>
    <property type="match status" value="1"/>
</dbReference>
<dbReference type="SUPFAM" id="SSF55666">
    <property type="entry name" value="Ribonuclease PH domain 2-like"/>
    <property type="match status" value="1"/>
</dbReference>
<dbReference type="SUPFAM" id="SSF54211">
    <property type="entry name" value="Ribosomal protein S5 domain 2-like"/>
    <property type="match status" value="1"/>
</dbReference>
<dbReference type="PROSITE" id="PS01277">
    <property type="entry name" value="RIBONUCLEASE_PH"/>
    <property type="match status" value="1"/>
</dbReference>
<feature type="chain" id="PRO_0000139872" description="Ribonuclease PH">
    <location>
        <begin position="1"/>
        <end position="246"/>
    </location>
</feature>
<feature type="binding site" evidence="1">
    <location>
        <position position="95"/>
    </location>
    <ligand>
        <name>phosphate</name>
        <dbReference type="ChEBI" id="CHEBI:43474"/>
        <note>substrate</note>
    </ligand>
</feature>
<feature type="binding site" evidence="1">
    <location>
        <begin position="133"/>
        <end position="135"/>
    </location>
    <ligand>
        <name>phosphate</name>
        <dbReference type="ChEBI" id="CHEBI:43474"/>
        <note>substrate</note>
    </ligand>
</feature>
<accession>Q7WI90</accession>
<gene>
    <name evidence="1" type="primary">rph</name>
    <name type="ordered locus">BB2961</name>
</gene>
<organism>
    <name type="scientific">Bordetella bronchiseptica (strain ATCC BAA-588 / NCTC 13252 / RB50)</name>
    <name type="common">Alcaligenes bronchisepticus</name>
    <dbReference type="NCBI Taxonomy" id="257310"/>
    <lineage>
        <taxon>Bacteria</taxon>
        <taxon>Pseudomonadati</taxon>
        <taxon>Pseudomonadota</taxon>
        <taxon>Betaproteobacteria</taxon>
        <taxon>Burkholderiales</taxon>
        <taxon>Alcaligenaceae</taxon>
        <taxon>Bordetella</taxon>
    </lineage>
</organism>
<name>RNPH_BORBR</name>
<protein>
    <recommendedName>
        <fullName evidence="1">Ribonuclease PH</fullName>
        <shortName evidence="1">RNase PH</shortName>
        <ecNumber evidence="1">2.7.7.56</ecNumber>
    </recommendedName>
    <alternativeName>
        <fullName evidence="1">tRNA nucleotidyltransferase</fullName>
    </alternativeName>
</protein>
<evidence type="ECO:0000255" key="1">
    <source>
        <dbReference type="HAMAP-Rule" id="MF_00564"/>
    </source>
</evidence>
<reference key="1">
    <citation type="journal article" date="2003" name="Nat. Genet.">
        <title>Comparative analysis of the genome sequences of Bordetella pertussis, Bordetella parapertussis and Bordetella bronchiseptica.</title>
        <authorList>
            <person name="Parkhill J."/>
            <person name="Sebaihia M."/>
            <person name="Preston A."/>
            <person name="Murphy L.D."/>
            <person name="Thomson N.R."/>
            <person name="Harris D.E."/>
            <person name="Holden M.T.G."/>
            <person name="Churcher C.M."/>
            <person name="Bentley S.D."/>
            <person name="Mungall K.L."/>
            <person name="Cerdeno-Tarraga A.-M."/>
            <person name="Temple L."/>
            <person name="James K.D."/>
            <person name="Harris B."/>
            <person name="Quail M.A."/>
            <person name="Achtman M."/>
            <person name="Atkin R."/>
            <person name="Baker S."/>
            <person name="Basham D."/>
            <person name="Bason N."/>
            <person name="Cherevach I."/>
            <person name="Chillingworth T."/>
            <person name="Collins M."/>
            <person name="Cronin A."/>
            <person name="Davis P."/>
            <person name="Doggett J."/>
            <person name="Feltwell T."/>
            <person name="Goble A."/>
            <person name="Hamlin N."/>
            <person name="Hauser H."/>
            <person name="Holroyd S."/>
            <person name="Jagels K."/>
            <person name="Leather S."/>
            <person name="Moule S."/>
            <person name="Norberczak H."/>
            <person name="O'Neil S."/>
            <person name="Ormond D."/>
            <person name="Price C."/>
            <person name="Rabbinowitsch E."/>
            <person name="Rutter S."/>
            <person name="Sanders M."/>
            <person name="Saunders D."/>
            <person name="Seeger K."/>
            <person name="Sharp S."/>
            <person name="Simmonds M."/>
            <person name="Skelton J."/>
            <person name="Squares R."/>
            <person name="Squares S."/>
            <person name="Stevens K."/>
            <person name="Unwin L."/>
            <person name="Whitehead S."/>
            <person name="Barrell B.G."/>
            <person name="Maskell D.J."/>
        </authorList>
    </citation>
    <scope>NUCLEOTIDE SEQUENCE [LARGE SCALE GENOMIC DNA]</scope>
    <source>
        <strain>ATCC BAA-588 / NCTC 13252 / RB50</strain>
    </source>
</reference>
<keyword id="KW-0548">Nucleotidyltransferase</keyword>
<keyword id="KW-0694">RNA-binding</keyword>
<keyword id="KW-0698">rRNA processing</keyword>
<keyword id="KW-0808">Transferase</keyword>
<keyword id="KW-0819">tRNA processing</keyword>
<keyword id="KW-0820">tRNA-binding</keyword>
<proteinExistence type="inferred from homology"/>
<sequence>MSTSAADTLSRPSGRAVDALRPFSLERGFTRYAEGSVLVRAGNTHVLCTASVLEKVPPFLKGRGEGWVTAEYGMLPRATHTRGDREAARGKQSGRTQEIQRLIGRSLRAVFDLRLLGERTLHLDCDVLQADGGTRCASITGAWVAAADAVALLMQRGDLAHNPIRDAVAAVSVGLVDGRAVLDLDYQEDSACAADVNVVMTGSGAFVEVQGTGEGATFTRGELDTMLGLAEGGIAQLVRAQREALQ</sequence>
<comment type="function">
    <text evidence="1">Phosphorolytic 3'-5' exoribonuclease that plays an important role in tRNA 3'-end maturation. Removes nucleotide residues following the 3'-CCA terminus of tRNAs; can also add nucleotides to the ends of RNA molecules by using nucleoside diphosphates as substrates, but this may not be physiologically important. Probably plays a role in initiation of 16S rRNA degradation (leading to ribosome degradation) during starvation.</text>
</comment>
<comment type="catalytic activity">
    <reaction evidence="1">
        <text>tRNA(n+1) + phosphate = tRNA(n) + a ribonucleoside 5'-diphosphate</text>
        <dbReference type="Rhea" id="RHEA:10628"/>
        <dbReference type="Rhea" id="RHEA-COMP:17343"/>
        <dbReference type="Rhea" id="RHEA-COMP:17344"/>
        <dbReference type="ChEBI" id="CHEBI:43474"/>
        <dbReference type="ChEBI" id="CHEBI:57930"/>
        <dbReference type="ChEBI" id="CHEBI:173114"/>
        <dbReference type="EC" id="2.7.7.56"/>
    </reaction>
</comment>
<comment type="subunit">
    <text evidence="1">Homohexameric ring arranged as a trimer of dimers.</text>
</comment>
<comment type="similarity">
    <text evidence="1">Belongs to the RNase PH family.</text>
</comment>